<evidence type="ECO:0000255" key="1">
    <source>
        <dbReference type="HAMAP-Rule" id="MF_00176"/>
    </source>
</evidence>
<accession>Q3B5A4</accession>
<protein>
    <recommendedName>
        <fullName evidence="1">Serine--tRNA ligase</fullName>
        <ecNumber evidence="1">6.1.1.11</ecNumber>
    </recommendedName>
    <alternativeName>
        <fullName evidence="1">Seryl-tRNA synthetase</fullName>
        <shortName evidence="1">SerRS</shortName>
    </alternativeName>
    <alternativeName>
        <fullName evidence="1">Seryl-tRNA(Ser/Sec) synthetase</fullName>
    </alternativeName>
</protein>
<proteinExistence type="inferred from homology"/>
<gene>
    <name evidence="1" type="primary">serS</name>
    <name type="ordered locus">Plut_0594</name>
</gene>
<sequence>MLDINYIRQNPEEVATMLHDRQLQGDEPKLQRLLFIDTERRTLVQKTDELKALRNTRSKEIAELKKSGSGSADQLIADMQAVGEEIAGLDSRLSALNMEMEEILLALPNRLDPSVPVGRTAEDNLVFGEPVHFPHPLEFDVKNHLELGKALGILDFERGAKVTGAGFPVYVGKGARLERALINFMLDRHTEEHGYTEVFPPFLVNRDSLRGTGQWPKFADQVYHMEEDELYAIPTAEVPVTNLHRDEMLSAEALPISYAAYSACFRREAGSYGKDTRGFLRVHQFNKVEMVKFTRPEESYAALETIRGHAEAILCALEIPYRVLLLCSGDISANAAKCYDIEVWSPAERKYLEASSCSNFEDYQARRANIRFKADGKSKPEFVHTLNGSGLATSRLMVSIIEHYQTLEGGIRVPEVLVPYTGFSQISPSC</sequence>
<feature type="chain" id="PRO_1000019759" description="Serine--tRNA ligase">
    <location>
        <begin position="1"/>
        <end position="430"/>
    </location>
</feature>
<feature type="binding site" evidence="1">
    <location>
        <begin position="235"/>
        <end position="237"/>
    </location>
    <ligand>
        <name>L-serine</name>
        <dbReference type="ChEBI" id="CHEBI:33384"/>
    </ligand>
</feature>
<feature type="binding site" evidence="1">
    <location>
        <begin position="266"/>
        <end position="268"/>
    </location>
    <ligand>
        <name>ATP</name>
        <dbReference type="ChEBI" id="CHEBI:30616"/>
    </ligand>
</feature>
<feature type="binding site" evidence="1">
    <location>
        <position position="282"/>
    </location>
    <ligand>
        <name>ATP</name>
        <dbReference type="ChEBI" id="CHEBI:30616"/>
    </ligand>
</feature>
<feature type="binding site" evidence="1">
    <location>
        <position position="289"/>
    </location>
    <ligand>
        <name>L-serine</name>
        <dbReference type="ChEBI" id="CHEBI:33384"/>
    </ligand>
</feature>
<feature type="binding site" evidence="1">
    <location>
        <begin position="353"/>
        <end position="356"/>
    </location>
    <ligand>
        <name>ATP</name>
        <dbReference type="ChEBI" id="CHEBI:30616"/>
    </ligand>
</feature>
<feature type="binding site" evidence="1">
    <location>
        <position position="389"/>
    </location>
    <ligand>
        <name>L-serine</name>
        <dbReference type="ChEBI" id="CHEBI:33384"/>
    </ligand>
</feature>
<keyword id="KW-0030">Aminoacyl-tRNA synthetase</keyword>
<keyword id="KW-0067">ATP-binding</keyword>
<keyword id="KW-0963">Cytoplasm</keyword>
<keyword id="KW-0436">Ligase</keyword>
<keyword id="KW-0547">Nucleotide-binding</keyword>
<keyword id="KW-0648">Protein biosynthesis</keyword>
<keyword id="KW-1185">Reference proteome</keyword>
<name>SYS_CHLL3</name>
<comment type="function">
    <text evidence="1">Catalyzes the attachment of serine to tRNA(Ser). Is also able to aminoacylate tRNA(Sec) with serine, to form the misacylated tRNA L-seryl-tRNA(Sec), which will be further converted into selenocysteinyl-tRNA(Sec).</text>
</comment>
<comment type="catalytic activity">
    <reaction evidence="1">
        <text>tRNA(Ser) + L-serine + ATP = L-seryl-tRNA(Ser) + AMP + diphosphate + H(+)</text>
        <dbReference type="Rhea" id="RHEA:12292"/>
        <dbReference type="Rhea" id="RHEA-COMP:9669"/>
        <dbReference type="Rhea" id="RHEA-COMP:9703"/>
        <dbReference type="ChEBI" id="CHEBI:15378"/>
        <dbReference type="ChEBI" id="CHEBI:30616"/>
        <dbReference type="ChEBI" id="CHEBI:33019"/>
        <dbReference type="ChEBI" id="CHEBI:33384"/>
        <dbReference type="ChEBI" id="CHEBI:78442"/>
        <dbReference type="ChEBI" id="CHEBI:78533"/>
        <dbReference type="ChEBI" id="CHEBI:456215"/>
        <dbReference type="EC" id="6.1.1.11"/>
    </reaction>
</comment>
<comment type="catalytic activity">
    <reaction evidence="1">
        <text>tRNA(Sec) + L-serine + ATP = L-seryl-tRNA(Sec) + AMP + diphosphate + H(+)</text>
        <dbReference type="Rhea" id="RHEA:42580"/>
        <dbReference type="Rhea" id="RHEA-COMP:9742"/>
        <dbReference type="Rhea" id="RHEA-COMP:10128"/>
        <dbReference type="ChEBI" id="CHEBI:15378"/>
        <dbReference type="ChEBI" id="CHEBI:30616"/>
        <dbReference type="ChEBI" id="CHEBI:33019"/>
        <dbReference type="ChEBI" id="CHEBI:33384"/>
        <dbReference type="ChEBI" id="CHEBI:78442"/>
        <dbReference type="ChEBI" id="CHEBI:78533"/>
        <dbReference type="ChEBI" id="CHEBI:456215"/>
        <dbReference type="EC" id="6.1.1.11"/>
    </reaction>
</comment>
<comment type="pathway">
    <text evidence="1">Aminoacyl-tRNA biosynthesis; selenocysteinyl-tRNA(Sec) biosynthesis; L-seryl-tRNA(Sec) from L-serine and tRNA(Sec): step 1/1.</text>
</comment>
<comment type="subunit">
    <text evidence="1">Homodimer. The tRNA molecule binds across the dimer.</text>
</comment>
<comment type="subcellular location">
    <subcellularLocation>
        <location evidence="1">Cytoplasm</location>
    </subcellularLocation>
</comment>
<comment type="domain">
    <text evidence="1">Consists of two distinct domains, a catalytic core and a N-terminal extension that is involved in tRNA binding.</text>
</comment>
<comment type="similarity">
    <text evidence="1">Belongs to the class-II aminoacyl-tRNA synthetase family. Type-1 seryl-tRNA synthetase subfamily.</text>
</comment>
<organism>
    <name type="scientific">Chlorobium luteolum (strain DSM 273 / BCRC 81028 / 2530)</name>
    <name type="common">Pelodictyon luteolum</name>
    <dbReference type="NCBI Taxonomy" id="319225"/>
    <lineage>
        <taxon>Bacteria</taxon>
        <taxon>Pseudomonadati</taxon>
        <taxon>Chlorobiota</taxon>
        <taxon>Chlorobiia</taxon>
        <taxon>Chlorobiales</taxon>
        <taxon>Chlorobiaceae</taxon>
        <taxon>Chlorobium/Pelodictyon group</taxon>
        <taxon>Pelodictyon</taxon>
    </lineage>
</organism>
<reference key="1">
    <citation type="submission" date="2005-08" db="EMBL/GenBank/DDBJ databases">
        <title>Complete sequence of Pelodictyon luteolum DSM 273.</title>
        <authorList>
            <consortium name="US DOE Joint Genome Institute"/>
            <person name="Copeland A."/>
            <person name="Lucas S."/>
            <person name="Lapidus A."/>
            <person name="Barry K."/>
            <person name="Detter J.C."/>
            <person name="Glavina T."/>
            <person name="Hammon N."/>
            <person name="Israni S."/>
            <person name="Pitluck S."/>
            <person name="Bryant D."/>
            <person name="Schmutz J."/>
            <person name="Larimer F."/>
            <person name="Land M."/>
            <person name="Kyrpides N."/>
            <person name="Ivanova N."/>
            <person name="Richardson P."/>
        </authorList>
    </citation>
    <scope>NUCLEOTIDE SEQUENCE [LARGE SCALE GENOMIC DNA]</scope>
    <source>
        <strain>DSM 273 / BCRC 81028 / 2530</strain>
    </source>
</reference>
<dbReference type="EC" id="6.1.1.11" evidence="1"/>
<dbReference type="EMBL" id="CP000096">
    <property type="protein sequence ID" value="ABB23477.1"/>
    <property type="molecule type" value="Genomic_DNA"/>
</dbReference>
<dbReference type="RefSeq" id="WP_011357352.1">
    <property type="nucleotide sequence ID" value="NC_007512.1"/>
</dbReference>
<dbReference type="SMR" id="Q3B5A4"/>
<dbReference type="STRING" id="319225.Plut_0594"/>
<dbReference type="KEGG" id="plt:Plut_0594"/>
<dbReference type="eggNOG" id="COG0172">
    <property type="taxonomic scope" value="Bacteria"/>
</dbReference>
<dbReference type="HOGENOM" id="CLU_023797_1_1_10"/>
<dbReference type="OrthoDB" id="9804647at2"/>
<dbReference type="UniPathway" id="UPA00906">
    <property type="reaction ID" value="UER00895"/>
</dbReference>
<dbReference type="Proteomes" id="UP000002709">
    <property type="component" value="Chromosome"/>
</dbReference>
<dbReference type="GO" id="GO:0005737">
    <property type="term" value="C:cytoplasm"/>
    <property type="evidence" value="ECO:0007669"/>
    <property type="project" value="UniProtKB-SubCell"/>
</dbReference>
<dbReference type="GO" id="GO:0005524">
    <property type="term" value="F:ATP binding"/>
    <property type="evidence" value="ECO:0007669"/>
    <property type="project" value="UniProtKB-UniRule"/>
</dbReference>
<dbReference type="GO" id="GO:0004828">
    <property type="term" value="F:serine-tRNA ligase activity"/>
    <property type="evidence" value="ECO:0007669"/>
    <property type="project" value="UniProtKB-UniRule"/>
</dbReference>
<dbReference type="GO" id="GO:0016260">
    <property type="term" value="P:selenocysteine biosynthetic process"/>
    <property type="evidence" value="ECO:0007669"/>
    <property type="project" value="UniProtKB-UniRule"/>
</dbReference>
<dbReference type="GO" id="GO:0006434">
    <property type="term" value="P:seryl-tRNA aminoacylation"/>
    <property type="evidence" value="ECO:0007669"/>
    <property type="project" value="UniProtKB-UniRule"/>
</dbReference>
<dbReference type="CDD" id="cd00770">
    <property type="entry name" value="SerRS_core"/>
    <property type="match status" value="1"/>
</dbReference>
<dbReference type="Gene3D" id="3.30.930.10">
    <property type="entry name" value="Bira Bifunctional Protein, Domain 2"/>
    <property type="match status" value="1"/>
</dbReference>
<dbReference type="Gene3D" id="1.10.287.40">
    <property type="entry name" value="Serine-tRNA synthetase, tRNA binding domain"/>
    <property type="match status" value="1"/>
</dbReference>
<dbReference type="HAMAP" id="MF_00176">
    <property type="entry name" value="Ser_tRNA_synth_type1"/>
    <property type="match status" value="1"/>
</dbReference>
<dbReference type="InterPro" id="IPR002314">
    <property type="entry name" value="aa-tRNA-synt_IIb"/>
</dbReference>
<dbReference type="InterPro" id="IPR006195">
    <property type="entry name" value="aa-tRNA-synth_II"/>
</dbReference>
<dbReference type="InterPro" id="IPR045864">
    <property type="entry name" value="aa-tRNA-synth_II/BPL/LPL"/>
</dbReference>
<dbReference type="InterPro" id="IPR002317">
    <property type="entry name" value="Ser-tRNA-ligase_type_1"/>
</dbReference>
<dbReference type="InterPro" id="IPR015866">
    <property type="entry name" value="Ser-tRNA-synth_1_N"/>
</dbReference>
<dbReference type="InterPro" id="IPR042103">
    <property type="entry name" value="SerRS_1_N_sf"/>
</dbReference>
<dbReference type="InterPro" id="IPR033729">
    <property type="entry name" value="SerRS_core"/>
</dbReference>
<dbReference type="InterPro" id="IPR010978">
    <property type="entry name" value="tRNA-bd_arm"/>
</dbReference>
<dbReference type="NCBIfam" id="TIGR00414">
    <property type="entry name" value="serS"/>
    <property type="match status" value="1"/>
</dbReference>
<dbReference type="PANTHER" id="PTHR43697:SF1">
    <property type="entry name" value="SERINE--TRNA LIGASE"/>
    <property type="match status" value="1"/>
</dbReference>
<dbReference type="PANTHER" id="PTHR43697">
    <property type="entry name" value="SERYL-TRNA SYNTHETASE"/>
    <property type="match status" value="1"/>
</dbReference>
<dbReference type="Pfam" id="PF02403">
    <property type="entry name" value="Seryl_tRNA_N"/>
    <property type="match status" value="1"/>
</dbReference>
<dbReference type="Pfam" id="PF00587">
    <property type="entry name" value="tRNA-synt_2b"/>
    <property type="match status" value="1"/>
</dbReference>
<dbReference type="PIRSF" id="PIRSF001529">
    <property type="entry name" value="Ser-tRNA-synth_IIa"/>
    <property type="match status" value="1"/>
</dbReference>
<dbReference type="PRINTS" id="PR00981">
    <property type="entry name" value="TRNASYNTHSER"/>
</dbReference>
<dbReference type="SUPFAM" id="SSF55681">
    <property type="entry name" value="Class II aaRS and biotin synthetases"/>
    <property type="match status" value="1"/>
</dbReference>
<dbReference type="SUPFAM" id="SSF46589">
    <property type="entry name" value="tRNA-binding arm"/>
    <property type="match status" value="1"/>
</dbReference>
<dbReference type="PROSITE" id="PS50862">
    <property type="entry name" value="AA_TRNA_LIGASE_II"/>
    <property type="match status" value="1"/>
</dbReference>